<gene>
    <name type="primary">RIX1</name>
    <name type="ordered locus">CAGL0D02706g</name>
</gene>
<dbReference type="EMBL" id="CR380950">
    <property type="protein sequence ID" value="CAG58444.1"/>
    <property type="molecule type" value="Genomic_DNA"/>
</dbReference>
<dbReference type="RefSeq" id="XP_445533.1">
    <property type="nucleotide sequence ID" value="XM_445533.1"/>
</dbReference>
<dbReference type="SMR" id="Q6FW61"/>
<dbReference type="FunCoup" id="Q6FW61">
    <property type="interactions" value="352"/>
</dbReference>
<dbReference type="STRING" id="284593.Q6FW61"/>
<dbReference type="EnsemblFungi" id="CAGL0D02706g-T">
    <property type="protein sequence ID" value="CAGL0D02706g-T-p1"/>
    <property type="gene ID" value="CAGL0D02706g"/>
</dbReference>
<dbReference type="KEGG" id="cgr:2887183"/>
<dbReference type="CGD" id="CAL0128053">
    <property type="gene designation" value="RIX1"/>
</dbReference>
<dbReference type="VEuPathDB" id="FungiDB:CAGL0D02706g"/>
<dbReference type="eggNOG" id="ENOG502R65X">
    <property type="taxonomic scope" value="Eukaryota"/>
</dbReference>
<dbReference type="HOGENOM" id="CLU_020084_0_0_1"/>
<dbReference type="InParanoid" id="Q6FW61"/>
<dbReference type="OMA" id="WCGINLI"/>
<dbReference type="Proteomes" id="UP000002428">
    <property type="component" value="Chromosome D"/>
</dbReference>
<dbReference type="GO" id="GO:0005829">
    <property type="term" value="C:cytosol"/>
    <property type="evidence" value="ECO:0007669"/>
    <property type="project" value="EnsemblFungi"/>
</dbReference>
<dbReference type="GO" id="GO:0005654">
    <property type="term" value="C:nucleoplasm"/>
    <property type="evidence" value="ECO:0007669"/>
    <property type="project" value="EnsemblFungi"/>
</dbReference>
<dbReference type="GO" id="GO:0120330">
    <property type="term" value="C:rixosome complex"/>
    <property type="evidence" value="ECO:0007669"/>
    <property type="project" value="EnsemblFungi"/>
</dbReference>
<dbReference type="GO" id="GO:0003682">
    <property type="term" value="F:chromatin binding"/>
    <property type="evidence" value="ECO:0007669"/>
    <property type="project" value="EnsemblFungi"/>
</dbReference>
<dbReference type="GO" id="GO:0006267">
    <property type="term" value="P:pre-replicative complex assembly involved in nuclear cell cycle DNA replication"/>
    <property type="evidence" value="ECO:0007669"/>
    <property type="project" value="EnsemblFungi"/>
</dbReference>
<dbReference type="GO" id="GO:0030174">
    <property type="term" value="P:regulation of DNA-templated DNA replication initiation"/>
    <property type="evidence" value="ECO:0007669"/>
    <property type="project" value="EnsemblFungi"/>
</dbReference>
<dbReference type="GO" id="GO:0000027">
    <property type="term" value="P:ribosomal large subunit assembly"/>
    <property type="evidence" value="ECO:0007669"/>
    <property type="project" value="EnsemblFungi"/>
</dbReference>
<dbReference type="GO" id="GO:0006364">
    <property type="term" value="P:rRNA processing"/>
    <property type="evidence" value="ECO:0007669"/>
    <property type="project" value="UniProtKB-KW"/>
</dbReference>
<dbReference type="InterPro" id="IPR012583">
    <property type="entry name" value="RIX1_N"/>
</dbReference>
<dbReference type="PANTHER" id="PTHR34105">
    <property type="entry name" value="PROLINE-, GLUTAMIC ACID- AND LEUCINE-RICH PROTEIN 1"/>
    <property type="match status" value="1"/>
</dbReference>
<dbReference type="PANTHER" id="PTHR34105:SF1">
    <property type="entry name" value="PROLINE-, GLUTAMIC ACID- AND LEUCINE-RICH PROTEIN 1"/>
    <property type="match status" value="1"/>
</dbReference>
<dbReference type="Pfam" id="PF08167">
    <property type="entry name" value="RIX1"/>
    <property type="match status" value="1"/>
</dbReference>
<comment type="function">
    <text evidence="1">Component of the RIX1 complex required for processing of ITS2 sequences from 35S pre-rRNA and the nucleoplasmic transit of the pre-60S ribosomal subunits. Regulates pre-60S association of the critical remodeling factor MDN1.</text>
</comment>
<comment type="subunit">
    <text evidence="1">Component of the RIX1 complex, composed of IPI1, RIX1/IPI2 and IPI3 in a 1:2:2 stoichiometry. The complex interacts (via RIX1) with MDN1 (via its hexameric AAA ATPase ring) and the pre-60S ribosome particles.</text>
</comment>
<comment type="subcellular location">
    <subcellularLocation>
        <location evidence="1">Nucleus</location>
    </subcellularLocation>
</comment>
<comment type="similarity">
    <text evidence="3">Belongs to the RIX1/PELP1 family.</text>
</comment>
<accession>Q6FW61</accession>
<organism>
    <name type="scientific">Candida glabrata (strain ATCC 2001 / BCRC 20586 / JCM 3761 / NBRC 0622 / NRRL Y-65 / CBS 138)</name>
    <name type="common">Yeast</name>
    <name type="synonym">Nakaseomyces glabratus</name>
    <dbReference type="NCBI Taxonomy" id="284593"/>
    <lineage>
        <taxon>Eukaryota</taxon>
        <taxon>Fungi</taxon>
        <taxon>Dikarya</taxon>
        <taxon>Ascomycota</taxon>
        <taxon>Saccharomycotina</taxon>
        <taxon>Saccharomycetes</taxon>
        <taxon>Saccharomycetales</taxon>
        <taxon>Saccharomycetaceae</taxon>
        <taxon>Nakaseomyces</taxon>
    </lineage>
</organism>
<reference key="1">
    <citation type="journal article" date="2004" name="Nature">
        <title>Genome evolution in yeasts.</title>
        <authorList>
            <person name="Dujon B."/>
            <person name="Sherman D."/>
            <person name="Fischer G."/>
            <person name="Durrens P."/>
            <person name="Casaregola S."/>
            <person name="Lafontaine I."/>
            <person name="de Montigny J."/>
            <person name="Marck C."/>
            <person name="Neuveglise C."/>
            <person name="Talla E."/>
            <person name="Goffard N."/>
            <person name="Frangeul L."/>
            <person name="Aigle M."/>
            <person name="Anthouard V."/>
            <person name="Babour A."/>
            <person name="Barbe V."/>
            <person name="Barnay S."/>
            <person name="Blanchin S."/>
            <person name="Beckerich J.-M."/>
            <person name="Beyne E."/>
            <person name="Bleykasten C."/>
            <person name="Boisrame A."/>
            <person name="Boyer J."/>
            <person name="Cattolico L."/>
            <person name="Confanioleri F."/>
            <person name="de Daruvar A."/>
            <person name="Despons L."/>
            <person name="Fabre E."/>
            <person name="Fairhead C."/>
            <person name="Ferry-Dumazet H."/>
            <person name="Groppi A."/>
            <person name="Hantraye F."/>
            <person name="Hennequin C."/>
            <person name="Jauniaux N."/>
            <person name="Joyet P."/>
            <person name="Kachouri R."/>
            <person name="Kerrest A."/>
            <person name="Koszul R."/>
            <person name="Lemaire M."/>
            <person name="Lesur I."/>
            <person name="Ma L."/>
            <person name="Muller H."/>
            <person name="Nicaud J.-M."/>
            <person name="Nikolski M."/>
            <person name="Oztas S."/>
            <person name="Ozier-Kalogeropoulos O."/>
            <person name="Pellenz S."/>
            <person name="Potier S."/>
            <person name="Richard G.-F."/>
            <person name="Straub M.-L."/>
            <person name="Suleau A."/>
            <person name="Swennen D."/>
            <person name="Tekaia F."/>
            <person name="Wesolowski-Louvel M."/>
            <person name="Westhof E."/>
            <person name="Wirth B."/>
            <person name="Zeniou-Meyer M."/>
            <person name="Zivanovic Y."/>
            <person name="Bolotin-Fukuhara M."/>
            <person name="Thierry A."/>
            <person name="Bouchier C."/>
            <person name="Caudron B."/>
            <person name="Scarpelli C."/>
            <person name="Gaillardin C."/>
            <person name="Weissenbach J."/>
            <person name="Wincker P."/>
            <person name="Souciet J.-L."/>
        </authorList>
    </citation>
    <scope>NUCLEOTIDE SEQUENCE [LARGE SCALE GENOMIC DNA]</scope>
    <source>
        <strain>ATCC 2001 / BCRC 20586 / JCM 3761 / NBRC 0622 / NRRL Y-65 / CBS 138</strain>
    </source>
</reference>
<evidence type="ECO:0000250" key="1">
    <source>
        <dbReference type="UniProtKB" id="P38883"/>
    </source>
</evidence>
<evidence type="ECO:0000256" key="2">
    <source>
        <dbReference type="SAM" id="MobiDB-lite"/>
    </source>
</evidence>
<evidence type="ECO:0000305" key="3"/>
<proteinExistence type="inferred from homology"/>
<protein>
    <recommendedName>
        <fullName>Pre-rRNA-processing protein RIX1</fullName>
    </recommendedName>
</protein>
<name>RIX1_CANGA</name>
<feature type="chain" id="PRO_0000308916" description="Pre-rRNA-processing protein RIX1">
    <location>
        <begin position="1"/>
        <end position="767"/>
    </location>
</feature>
<feature type="region of interest" description="Disordered" evidence="2">
    <location>
        <begin position="699"/>
        <end position="767"/>
    </location>
</feature>
<feature type="compositionally biased region" description="Acidic residues" evidence="2">
    <location>
        <begin position="742"/>
        <end position="752"/>
    </location>
</feature>
<sequence>MNKAIPVSVLADQLAESNGFQFHNILYHLKSSDYVDEKLLKSELSVLVVKIQKLLNSNSNYSIWKGCHAAVVICTYNPLVLMAYGGKLLDIVYQKLEIKVLQRSTNSLDAQGKQVLNSLVNAISVLMNLMRNKTGLSREFLVPKIKAIIPTLITLSQYEPELVLPILRSLIFKHTTTFKPFNAKFKVILTQFLTEGFDTLNEHTQKLVCDCYAYLHMVKTQTYQQQDEHSSHHKTFQDENWMNGMNAVLAEFKPLIELCGEILDFSQDEELTKLIGKMVPLAAESTSIFRSLTMDMNKSTTLYDIPKRIDVLSKMLMSFISVPTTYTIRIPLDKLNVTCSALLSITSKHIPIKRELRRDIELNATINDVFTKIQFAGIRLYSTMVSKFGNVCFSYLSDIFYALSLFIPFKEKSLNIDFEKCFALKREFLVVFDLVSKIIANVGHQLTDIDFLLQLIEIGLDLTEERSLIQNVFQQTNAKKEQELSKTKNKNKKDNKRGSLADLYVSGSQFTLACDLKTFDTLNKFFISIIANQKLATAQMTKLSRYAIFTAQTYKQNLGEVPTTFVELLRTLVIQPGNERVTILPMAVNIIKESSDDVFDILSHPRLPMSILHSIEKSTFDNGEDDEDDNPDLHANEKQQEYNDQPVERSEQKVVDFVLEEPVAVDVKTKETVQFKDGITTSEDQVDTKRPRDEEFIIEKSSSAKKFRTENQPETIPIGVSDETVYQETEKVTVNVDTSSNDNEDDEDDSDFEIPAIELSDDDDEDE</sequence>
<keyword id="KW-0539">Nucleus</keyword>
<keyword id="KW-1185">Reference proteome</keyword>
<keyword id="KW-0690">Ribosome biogenesis</keyword>
<keyword id="KW-0698">rRNA processing</keyword>